<name>RS10_WOLPM</name>
<sequence>MKQDIYINIKAFDCSLLEECVRKFIDELKRSSAKLSGPIALPRKDSKFIVNRSPHVDKKSREQFEMRTSRRLIVLHDLTPTMMQMLTGLSFSAGVEVDLKVKEVKEVKV</sequence>
<organism>
    <name type="scientific">Wolbachia pipientis wMel</name>
    <dbReference type="NCBI Taxonomy" id="163164"/>
    <lineage>
        <taxon>Bacteria</taxon>
        <taxon>Pseudomonadati</taxon>
        <taxon>Pseudomonadota</taxon>
        <taxon>Alphaproteobacteria</taxon>
        <taxon>Rickettsiales</taxon>
        <taxon>Anaplasmataceae</taxon>
        <taxon>Wolbachieae</taxon>
        <taxon>Wolbachia</taxon>
    </lineage>
</organism>
<dbReference type="EMBL" id="AE017196">
    <property type="protein sequence ID" value="AAS14380.1"/>
    <property type="molecule type" value="Genomic_DNA"/>
</dbReference>
<dbReference type="RefSeq" id="WP_010962758.1">
    <property type="nucleotide sequence ID" value="NZ_OX384529.1"/>
</dbReference>
<dbReference type="SMR" id="Q73H86"/>
<dbReference type="EnsemblBacteria" id="AAS14380">
    <property type="protein sequence ID" value="AAS14380"/>
    <property type="gene ID" value="WD_0682"/>
</dbReference>
<dbReference type="GeneID" id="70036165"/>
<dbReference type="KEGG" id="wol:WD_0682"/>
<dbReference type="eggNOG" id="COG0051">
    <property type="taxonomic scope" value="Bacteria"/>
</dbReference>
<dbReference type="Proteomes" id="UP000008215">
    <property type="component" value="Chromosome"/>
</dbReference>
<dbReference type="GO" id="GO:1990904">
    <property type="term" value="C:ribonucleoprotein complex"/>
    <property type="evidence" value="ECO:0007669"/>
    <property type="project" value="UniProtKB-KW"/>
</dbReference>
<dbReference type="GO" id="GO:0005840">
    <property type="term" value="C:ribosome"/>
    <property type="evidence" value="ECO:0007669"/>
    <property type="project" value="UniProtKB-KW"/>
</dbReference>
<dbReference type="GO" id="GO:0003735">
    <property type="term" value="F:structural constituent of ribosome"/>
    <property type="evidence" value="ECO:0007669"/>
    <property type="project" value="InterPro"/>
</dbReference>
<dbReference type="GO" id="GO:0000049">
    <property type="term" value="F:tRNA binding"/>
    <property type="evidence" value="ECO:0007669"/>
    <property type="project" value="UniProtKB-UniRule"/>
</dbReference>
<dbReference type="GO" id="GO:0006412">
    <property type="term" value="P:translation"/>
    <property type="evidence" value="ECO:0007669"/>
    <property type="project" value="UniProtKB-UniRule"/>
</dbReference>
<dbReference type="Gene3D" id="3.30.70.600">
    <property type="entry name" value="Ribosomal protein S10 domain"/>
    <property type="match status" value="1"/>
</dbReference>
<dbReference type="HAMAP" id="MF_00508">
    <property type="entry name" value="Ribosomal_uS10"/>
    <property type="match status" value="1"/>
</dbReference>
<dbReference type="InterPro" id="IPR001848">
    <property type="entry name" value="Ribosomal_uS10"/>
</dbReference>
<dbReference type="InterPro" id="IPR027486">
    <property type="entry name" value="Ribosomal_uS10_dom"/>
</dbReference>
<dbReference type="InterPro" id="IPR036838">
    <property type="entry name" value="Ribosomal_uS10_dom_sf"/>
</dbReference>
<dbReference type="NCBIfam" id="NF001861">
    <property type="entry name" value="PRK00596.1"/>
    <property type="match status" value="1"/>
</dbReference>
<dbReference type="NCBIfam" id="TIGR01049">
    <property type="entry name" value="rpsJ_bact"/>
    <property type="match status" value="1"/>
</dbReference>
<dbReference type="PANTHER" id="PTHR11700">
    <property type="entry name" value="30S RIBOSOMAL PROTEIN S10 FAMILY MEMBER"/>
    <property type="match status" value="1"/>
</dbReference>
<dbReference type="Pfam" id="PF00338">
    <property type="entry name" value="Ribosomal_S10"/>
    <property type="match status" value="1"/>
</dbReference>
<dbReference type="PRINTS" id="PR00971">
    <property type="entry name" value="RIBOSOMALS10"/>
</dbReference>
<dbReference type="SMART" id="SM01403">
    <property type="entry name" value="Ribosomal_S10"/>
    <property type="match status" value="1"/>
</dbReference>
<dbReference type="SUPFAM" id="SSF54999">
    <property type="entry name" value="Ribosomal protein S10"/>
    <property type="match status" value="1"/>
</dbReference>
<accession>Q73H86</accession>
<protein>
    <recommendedName>
        <fullName evidence="1">Small ribosomal subunit protein uS10</fullName>
    </recommendedName>
    <alternativeName>
        <fullName evidence="2">30S ribosomal protein S10</fullName>
    </alternativeName>
</protein>
<feature type="chain" id="PRO_0000146634" description="Small ribosomal subunit protein uS10">
    <location>
        <begin position="1"/>
        <end position="109"/>
    </location>
</feature>
<comment type="function">
    <text evidence="1">Involved in the binding of tRNA to the ribosomes.</text>
</comment>
<comment type="subunit">
    <text evidence="1">Part of the 30S ribosomal subunit.</text>
</comment>
<comment type="similarity">
    <text evidence="1">Belongs to the universal ribosomal protein uS10 family.</text>
</comment>
<proteinExistence type="inferred from homology"/>
<reference key="1">
    <citation type="journal article" date="2004" name="PLoS Biol.">
        <title>Phylogenomics of the reproductive parasite Wolbachia pipientis wMel: a streamlined genome overrun by mobile genetic elements.</title>
        <authorList>
            <person name="Wu M."/>
            <person name="Sun L.V."/>
            <person name="Vamathevan J.J."/>
            <person name="Riegler M."/>
            <person name="DeBoy R.T."/>
            <person name="Brownlie J.C."/>
            <person name="McGraw E.A."/>
            <person name="Martin W."/>
            <person name="Esser C."/>
            <person name="Ahmadinejad N."/>
            <person name="Wiegand C."/>
            <person name="Madupu R."/>
            <person name="Beanan M.J."/>
            <person name="Brinkac L.M."/>
            <person name="Daugherty S.C."/>
            <person name="Durkin A.S."/>
            <person name="Kolonay J.F."/>
            <person name="Nelson W.C."/>
            <person name="Mohamoud Y."/>
            <person name="Lee P."/>
            <person name="Berry K.J."/>
            <person name="Young M.B."/>
            <person name="Utterback T.R."/>
            <person name="Weidman J.F."/>
            <person name="Nierman W.C."/>
            <person name="Paulsen I.T."/>
            <person name="Nelson K.E."/>
            <person name="Tettelin H."/>
            <person name="O'Neill S.L."/>
            <person name="Eisen J.A."/>
        </authorList>
    </citation>
    <scope>NUCLEOTIDE SEQUENCE [LARGE SCALE GENOMIC DNA]</scope>
</reference>
<gene>
    <name evidence="1" type="primary">rpsJ</name>
    <name type="ordered locus">WD_0682</name>
</gene>
<evidence type="ECO:0000255" key="1">
    <source>
        <dbReference type="HAMAP-Rule" id="MF_00508"/>
    </source>
</evidence>
<evidence type="ECO:0000305" key="2"/>
<keyword id="KW-0687">Ribonucleoprotein</keyword>
<keyword id="KW-0689">Ribosomal protein</keyword>